<name>RM45_XENLA</name>
<evidence type="ECO:0000250" key="1">
    <source>
        <dbReference type="UniProtKB" id="Q9BRJ2"/>
    </source>
</evidence>
<evidence type="ECO:0000255" key="2"/>
<evidence type="ECO:0000305" key="3"/>
<organism>
    <name type="scientific">Xenopus laevis</name>
    <name type="common">African clawed frog</name>
    <dbReference type="NCBI Taxonomy" id="8355"/>
    <lineage>
        <taxon>Eukaryota</taxon>
        <taxon>Metazoa</taxon>
        <taxon>Chordata</taxon>
        <taxon>Craniata</taxon>
        <taxon>Vertebrata</taxon>
        <taxon>Euteleostomi</taxon>
        <taxon>Amphibia</taxon>
        <taxon>Batrachia</taxon>
        <taxon>Anura</taxon>
        <taxon>Pipoidea</taxon>
        <taxon>Pipidae</taxon>
        <taxon>Xenopodinae</taxon>
        <taxon>Xenopus</taxon>
        <taxon>Xenopus</taxon>
    </lineage>
</organism>
<sequence length="309" mass="35351">MAASVRMYRAVGELGLASILSPARMAAPVLVMPVRTKKRYFIPPAVGAKQRTMDDMIKKARAAGVVTPQETMERPINIACTAGILDPYVPPEGDARLSSLSKEGLKQRTQQLKQTAASQLAIRKVKEYDSEFTTKTFPEKAQEIFITAHKYLTNFDRHKLHTLVTERCYPEMVRGNRYRTIRWSFVESIEAPRVVQVRCPEMVSKGNLYAQVTVRMHNKQTLIVYDRFGRVMCGSEEPRDVLEYVVFERHMVNPYGTWRMHGKIVPSWAPPKEPIVKTVLLPGQQLKPCQELDDISFEKAEPVPQQWYK</sequence>
<feature type="transit peptide" description="Mitochondrion" evidence="2">
    <location>
        <begin position="1"/>
        <end status="unknown"/>
    </location>
</feature>
<feature type="chain" id="PRO_0000030565" description="Large ribosomal subunit protein mL45">
    <location>
        <begin status="unknown"/>
        <end position="309"/>
    </location>
</feature>
<accession>P59480</accession>
<reference key="1">
    <citation type="submission" date="2003-01" db="EMBL/GenBank/DDBJ databases">
        <authorList>
            <consortium name="NIH - Xenopus Gene Collection (XGC) project"/>
        </authorList>
    </citation>
    <scope>NUCLEOTIDE SEQUENCE [LARGE SCALE MRNA]</scope>
    <source>
        <tissue>Embryo</tissue>
    </source>
</reference>
<proteinExistence type="evidence at transcript level"/>
<keyword id="KW-0496">Mitochondrion</keyword>
<keyword id="KW-1185">Reference proteome</keyword>
<keyword id="KW-0687">Ribonucleoprotein</keyword>
<keyword id="KW-0689">Ribosomal protein</keyword>
<keyword id="KW-0809">Transit peptide</keyword>
<comment type="function">
    <text evidence="1">Component of the mitochondrial large ribosomal subunit (mt-LSU). Within the mitochondrial ribosomes, required to direct the nascent polypeptide toward the tunnel exit and position the exit at a distance from the membrane surface.</text>
</comment>
<comment type="subunit">
    <text evidence="1">Component of the mitochondrial ribosome large subunit (39S) which comprises a 16S rRNA and about 50 distinct proteins.</text>
</comment>
<comment type="subcellular location">
    <subcellularLocation>
        <location evidence="1">Mitochondrion</location>
    </subcellularLocation>
</comment>
<comment type="similarity">
    <text evidence="3">Belongs to the mitochondrion-specific ribosomal protein mL45 family.</text>
</comment>
<protein>
    <recommendedName>
        <fullName evidence="3">Large ribosomal subunit protein mL45</fullName>
    </recommendedName>
    <alternativeName>
        <fullName>39S ribosomal protein L45, mitochondrial</fullName>
        <shortName>L45mt</shortName>
        <shortName>MRP-L45</shortName>
    </alternativeName>
</protein>
<gene>
    <name type="primary">mrpl45</name>
</gene>
<dbReference type="EMBL" id="BC043883">
    <property type="protein sequence ID" value="AAH43883.1"/>
    <property type="molecule type" value="mRNA"/>
</dbReference>
<dbReference type="RefSeq" id="NP_001079503.1">
    <property type="nucleotide sequence ID" value="NM_001086034.1"/>
</dbReference>
<dbReference type="SMR" id="P59480"/>
<dbReference type="GeneID" id="379190"/>
<dbReference type="KEGG" id="xla:379190"/>
<dbReference type="AGR" id="Xenbase:XB-GENE-6078150"/>
<dbReference type="CTD" id="379190"/>
<dbReference type="Xenbase" id="XB-GENE-6078150">
    <property type="gene designation" value="mrpl45.L"/>
</dbReference>
<dbReference type="OMA" id="DWAPPKD"/>
<dbReference type="OrthoDB" id="19619at2759"/>
<dbReference type="Proteomes" id="UP000186698">
    <property type="component" value="Chromosome 9_10L"/>
</dbReference>
<dbReference type="Bgee" id="379190">
    <property type="expression patterns" value="Expressed in heart and 19 other cell types or tissues"/>
</dbReference>
<dbReference type="GO" id="GO:0005762">
    <property type="term" value="C:mitochondrial large ribosomal subunit"/>
    <property type="evidence" value="ECO:0000250"/>
    <property type="project" value="UniProtKB"/>
</dbReference>
<dbReference type="GO" id="GO:0005739">
    <property type="term" value="C:mitochondrion"/>
    <property type="evidence" value="ECO:0000250"/>
    <property type="project" value="UniProtKB"/>
</dbReference>
<dbReference type="GO" id="GO:0003735">
    <property type="term" value="F:structural constituent of ribosome"/>
    <property type="evidence" value="ECO:0000250"/>
    <property type="project" value="UniProtKB"/>
</dbReference>
<dbReference type="GO" id="GO:0032543">
    <property type="term" value="P:mitochondrial translation"/>
    <property type="evidence" value="ECO:0000250"/>
    <property type="project" value="UniProtKB"/>
</dbReference>
<dbReference type="FunFam" id="3.10.450.240:FF:000003">
    <property type="entry name" value="39S ribosomal protein L45, mitochondrial"/>
    <property type="match status" value="1"/>
</dbReference>
<dbReference type="Gene3D" id="3.10.450.240">
    <property type="match status" value="1"/>
</dbReference>
<dbReference type="InterPro" id="IPR051975">
    <property type="entry name" value="mtLSU_mL45"/>
</dbReference>
<dbReference type="InterPro" id="IPR032710">
    <property type="entry name" value="NTF2-like_dom_sf"/>
</dbReference>
<dbReference type="InterPro" id="IPR007379">
    <property type="entry name" value="Tim44-like_dom"/>
</dbReference>
<dbReference type="PANTHER" id="PTHR28554">
    <property type="entry name" value="39S RIBOSOMAL PROTEIN L45, MITOCHONDRIAL"/>
    <property type="match status" value="1"/>
</dbReference>
<dbReference type="PANTHER" id="PTHR28554:SF1">
    <property type="entry name" value="LARGE RIBOSOMAL SUBUNIT PROTEIN ML45"/>
    <property type="match status" value="1"/>
</dbReference>
<dbReference type="Pfam" id="PF04280">
    <property type="entry name" value="Tim44"/>
    <property type="match status" value="1"/>
</dbReference>
<dbReference type="SMART" id="SM00978">
    <property type="entry name" value="Tim44"/>
    <property type="match status" value="1"/>
</dbReference>
<dbReference type="SUPFAM" id="SSF54427">
    <property type="entry name" value="NTF2-like"/>
    <property type="match status" value="1"/>
</dbReference>